<organismHost>
    <name type="scientific">Oryctolagus cuniculus</name>
    <name type="common">Rabbit</name>
    <dbReference type="NCBI Taxonomy" id="9986"/>
</organismHost>
<gene>
    <name type="primary">SPI-1</name>
    <name type="ordered locus">RPXV005</name>
</gene>
<name>SPI1_RABPU</name>
<proteinExistence type="inferred from homology"/>
<comment type="function">
    <text>This viral protein may be involved in the regulation of the complement cascade. Involved in red pock formation.</text>
</comment>
<comment type="subcellular location">
    <subcellularLocation>
        <location evidence="2">Host cytoplasm</location>
    </subcellularLocation>
</comment>
<comment type="similarity">
    <text evidence="2">Belongs to the serpin family. Poxviruses subfamily.</text>
</comment>
<evidence type="ECO:0000250" key="1"/>
<evidence type="ECO:0000305" key="2"/>
<accession>P42928</accession>
<accession>Q6RZT6</accession>
<dbReference type="EMBL" id="U07766">
    <property type="protein sequence ID" value="AAA19159.1"/>
    <property type="molecule type" value="Genomic_DNA"/>
</dbReference>
<dbReference type="EMBL" id="AY484669">
    <property type="protein sequence ID" value="AAS49718.1"/>
    <property type="molecule type" value="Genomic_DNA"/>
</dbReference>
<dbReference type="SMR" id="P42928"/>
<dbReference type="MEROPS" id="I04.028"/>
<dbReference type="Proteomes" id="UP000166173">
    <property type="component" value="Segment"/>
</dbReference>
<dbReference type="GO" id="GO:0005615">
    <property type="term" value="C:extracellular space"/>
    <property type="evidence" value="ECO:0007669"/>
    <property type="project" value="InterPro"/>
</dbReference>
<dbReference type="GO" id="GO:0030430">
    <property type="term" value="C:host cell cytoplasm"/>
    <property type="evidence" value="ECO:0007669"/>
    <property type="project" value="UniProtKB-SubCell"/>
</dbReference>
<dbReference type="GO" id="GO:0004867">
    <property type="term" value="F:serine-type endopeptidase inhibitor activity"/>
    <property type="evidence" value="ECO:0007669"/>
    <property type="project" value="UniProtKB-KW"/>
</dbReference>
<dbReference type="CDD" id="cd19583">
    <property type="entry name" value="serpinN_SPI-1_SPI-2"/>
    <property type="match status" value="1"/>
</dbReference>
<dbReference type="Gene3D" id="2.30.39.10">
    <property type="entry name" value="Alpha-1-antitrypsin, domain 1"/>
    <property type="match status" value="1"/>
</dbReference>
<dbReference type="Gene3D" id="3.30.497.10">
    <property type="entry name" value="Antithrombin, subunit I, domain 2"/>
    <property type="match status" value="1"/>
</dbReference>
<dbReference type="InterPro" id="IPR023795">
    <property type="entry name" value="Serpin_CS"/>
</dbReference>
<dbReference type="InterPro" id="IPR023796">
    <property type="entry name" value="Serpin_dom"/>
</dbReference>
<dbReference type="InterPro" id="IPR000215">
    <property type="entry name" value="Serpin_fam"/>
</dbReference>
<dbReference type="InterPro" id="IPR036186">
    <property type="entry name" value="Serpin_sf"/>
</dbReference>
<dbReference type="InterPro" id="IPR042178">
    <property type="entry name" value="Serpin_sf_1"/>
</dbReference>
<dbReference type="InterPro" id="IPR042185">
    <property type="entry name" value="Serpin_sf_2"/>
</dbReference>
<dbReference type="PANTHER" id="PTHR11461:SF211">
    <property type="entry name" value="GH10112P-RELATED"/>
    <property type="match status" value="1"/>
</dbReference>
<dbReference type="PANTHER" id="PTHR11461">
    <property type="entry name" value="SERINE PROTEASE INHIBITOR, SERPIN"/>
    <property type="match status" value="1"/>
</dbReference>
<dbReference type="Pfam" id="PF00079">
    <property type="entry name" value="Serpin"/>
    <property type="match status" value="1"/>
</dbReference>
<dbReference type="SMART" id="SM00093">
    <property type="entry name" value="SERPIN"/>
    <property type="match status" value="1"/>
</dbReference>
<dbReference type="SUPFAM" id="SSF56574">
    <property type="entry name" value="Serpins"/>
    <property type="match status" value="1"/>
</dbReference>
<dbReference type="PROSITE" id="PS00284">
    <property type="entry name" value="SERPIN"/>
    <property type="match status" value="1"/>
</dbReference>
<sequence>MDIFKELILKHPDENVLISPVSILSTLSILNHGAAGSTAEQLSKYIENVNENTPDDKKDDNNDMDVDIPYCATLATANKIYCSDSIEFHASFLQKIKDGFQTVNFNNANQTKELINEWVKTMTNGKINSLLTSPLSINTRMTVVSAVHFKAMWKYPFSKHLTYTDKFYISKNIVTSVDMMVSTENDLQYVHINELFGGFSIIDIPYEGNSSMVIILPDDIEGIYNIEKNITDEKFKKWCGMLSTKSIDLYMPKFKVEMTEPYNLVPILENLGLTNIFGYYADFSKMCNETITVEKFLHTTFIDVNEEYTEASAVTGVFMTNFSMVYRTKVYINHPFMYMIKDNTGRILFIGKYCYPQ</sequence>
<organism>
    <name type="scientific">Rabbitpox virus (strain Utrecht)</name>
    <name type="common">RPV</name>
    <dbReference type="NCBI Taxonomy" id="45417"/>
    <lineage>
        <taxon>Viruses</taxon>
        <taxon>Varidnaviria</taxon>
        <taxon>Bamfordvirae</taxon>
        <taxon>Nucleocytoviricota</taxon>
        <taxon>Pokkesviricetes</taxon>
        <taxon>Chitovirales</taxon>
        <taxon>Poxviridae</taxon>
        <taxon>Chordopoxvirinae</taxon>
        <taxon>Orthopoxvirus</taxon>
        <taxon>Vaccinia virus</taxon>
    </lineage>
</organism>
<reference key="1">
    <citation type="journal article" date="1994" name="Virology">
        <title>The SPI-1 gene of rabbitpox virus determines host range and is required for hemorrhagic pock formation.</title>
        <authorList>
            <person name="Ali A.N."/>
            <person name="Turner P.C."/>
            <person name="Brooks M.A."/>
            <person name="Moyer R.W."/>
        </authorList>
    </citation>
    <scope>NUCLEOTIDE SEQUENCE [GENOMIC DNA]</scope>
</reference>
<reference key="2">
    <citation type="journal article" date="2005" name="J. Gen. Virol.">
        <title>Complete coding sequences of the rabbitpox virus genome.</title>
        <authorList>
            <person name="Li G."/>
            <person name="Chen N."/>
            <person name="Roper R.L."/>
            <person name="Feng Z."/>
            <person name="Hunter A.L."/>
            <person name="Danila M."/>
            <person name="Lefkowitz E.J."/>
            <person name="Buller R.M.L."/>
            <person name="Upton C."/>
        </authorList>
    </citation>
    <scope>NUCLEOTIDE SEQUENCE [LARGE SCALE GENOMIC DNA]</scope>
</reference>
<protein>
    <recommendedName>
        <fullName>Serine proteinase inhibitor 1</fullName>
        <shortName>Serp-1</shortName>
        <shortName>Serpin-1</shortName>
    </recommendedName>
</protein>
<feature type="chain" id="PRO_0000094140" description="Serine proteinase inhibitor 1">
    <location>
        <begin position="1"/>
        <end position="357"/>
    </location>
</feature>
<feature type="site" description="Reactive bond" evidence="1">
    <location>
        <begin position="322"/>
        <end position="323"/>
    </location>
</feature>
<keyword id="KW-1035">Host cytoplasm</keyword>
<keyword id="KW-0646">Protease inhibitor</keyword>
<keyword id="KW-0722">Serine protease inhibitor</keyword>